<name>CCMA_ECOL5</name>
<reference key="1">
    <citation type="journal article" date="2006" name="Mol. Microbiol.">
        <title>Role of pathogenicity island-associated integrases in the genome plasticity of uropathogenic Escherichia coli strain 536.</title>
        <authorList>
            <person name="Hochhut B."/>
            <person name="Wilde C."/>
            <person name="Balling G."/>
            <person name="Middendorf B."/>
            <person name="Dobrindt U."/>
            <person name="Brzuszkiewicz E."/>
            <person name="Gottschalk G."/>
            <person name="Carniel E."/>
            <person name="Hacker J."/>
        </authorList>
    </citation>
    <scope>NUCLEOTIDE SEQUENCE [LARGE SCALE GENOMIC DNA]</scope>
    <source>
        <strain>536 / UPEC</strain>
    </source>
</reference>
<gene>
    <name evidence="1" type="primary">ccmA</name>
    <name type="ordered locus">ECP_2242</name>
</gene>
<accession>Q0TFP1</accession>
<comment type="function">
    <text evidence="1">Part of the ABC transporter complex CcmAB involved in the biogenesis of c-type cytochromes; once thought to export heme, this seems not to be the case, but its exact role is uncertain. Responsible for energy coupling to the transport system.</text>
</comment>
<comment type="catalytic activity">
    <reaction evidence="1">
        <text>heme b(in) + ATP + H2O = heme b(out) + ADP + phosphate + H(+)</text>
        <dbReference type="Rhea" id="RHEA:19261"/>
        <dbReference type="ChEBI" id="CHEBI:15377"/>
        <dbReference type="ChEBI" id="CHEBI:15378"/>
        <dbReference type="ChEBI" id="CHEBI:30616"/>
        <dbReference type="ChEBI" id="CHEBI:43474"/>
        <dbReference type="ChEBI" id="CHEBI:60344"/>
        <dbReference type="ChEBI" id="CHEBI:456216"/>
        <dbReference type="EC" id="7.6.2.5"/>
    </reaction>
</comment>
<comment type="subunit">
    <text evidence="1">The complex is composed of two ATP-binding proteins (CcmA) and two transmembrane proteins (CcmB).</text>
</comment>
<comment type="subcellular location">
    <subcellularLocation>
        <location evidence="1">Cell inner membrane</location>
        <topology evidence="1">Peripheral membrane protein</topology>
    </subcellularLocation>
</comment>
<comment type="similarity">
    <text evidence="1">Belongs to the ABC transporter superfamily. CcmA exporter (TC 3.A.1.107) family.</text>
</comment>
<comment type="sequence caution" evidence="2">
    <conflict type="erroneous initiation">
        <sequence resource="EMBL-CDS" id="ABG70238"/>
    </conflict>
</comment>
<keyword id="KW-0067">ATP-binding</keyword>
<keyword id="KW-0997">Cell inner membrane</keyword>
<keyword id="KW-1003">Cell membrane</keyword>
<keyword id="KW-0201">Cytochrome c-type biogenesis</keyword>
<keyword id="KW-0472">Membrane</keyword>
<keyword id="KW-0547">Nucleotide-binding</keyword>
<keyword id="KW-1278">Translocase</keyword>
<keyword id="KW-0813">Transport</keyword>
<protein>
    <recommendedName>
        <fullName evidence="1">Cytochrome c biogenesis ATP-binding export protein CcmA</fullName>
        <ecNumber evidence="1">7.6.2.5</ecNumber>
    </recommendedName>
    <alternativeName>
        <fullName evidence="1">Heme exporter protein A</fullName>
    </alternativeName>
</protein>
<dbReference type="EC" id="7.6.2.5" evidence="1"/>
<dbReference type="EMBL" id="CP000247">
    <property type="protein sequence ID" value="ABG70238.1"/>
    <property type="status" value="ALT_INIT"/>
    <property type="molecule type" value="Genomic_DNA"/>
</dbReference>
<dbReference type="RefSeq" id="WP_000525587.1">
    <property type="nucleotide sequence ID" value="NC_008253.1"/>
</dbReference>
<dbReference type="SMR" id="Q0TFP1"/>
<dbReference type="GeneID" id="75206453"/>
<dbReference type="KEGG" id="ecp:ECP_2242"/>
<dbReference type="HOGENOM" id="CLU_000604_1_2_6"/>
<dbReference type="Proteomes" id="UP000009182">
    <property type="component" value="Chromosome"/>
</dbReference>
<dbReference type="GO" id="GO:0005886">
    <property type="term" value="C:plasma membrane"/>
    <property type="evidence" value="ECO:0007669"/>
    <property type="project" value="UniProtKB-SubCell"/>
</dbReference>
<dbReference type="GO" id="GO:0015439">
    <property type="term" value="F:ABC-type heme transporter activity"/>
    <property type="evidence" value="ECO:0007669"/>
    <property type="project" value="UniProtKB-EC"/>
</dbReference>
<dbReference type="GO" id="GO:0005524">
    <property type="term" value="F:ATP binding"/>
    <property type="evidence" value="ECO:0007669"/>
    <property type="project" value="UniProtKB-KW"/>
</dbReference>
<dbReference type="GO" id="GO:0016887">
    <property type="term" value="F:ATP hydrolysis activity"/>
    <property type="evidence" value="ECO:0007669"/>
    <property type="project" value="InterPro"/>
</dbReference>
<dbReference type="GO" id="GO:0017004">
    <property type="term" value="P:cytochrome complex assembly"/>
    <property type="evidence" value="ECO:0007669"/>
    <property type="project" value="UniProtKB-KW"/>
</dbReference>
<dbReference type="CDD" id="cd03231">
    <property type="entry name" value="ABC_CcmA_heme_exporter"/>
    <property type="match status" value="1"/>
</dbReference>
<dbReference type="FunFam" id="3.40.50.300:FF:001098">
    <property type="entry name" value="Cytochrome c biogenesis ATP-binding export protein CcmA"/>
    <property type="match status" value="1"/>
</dbReference>
<dbReference type="Gene3D" id="3.40.50.300">
    <property type="entry name" value="P-loop containing nucleotide triphosphate hydrolases"/>
    <property type="match status" value="1"/>
</dbReference>
<dbReference type="InterPro" id="IPR003593">
    <property type="entry name" value="AAA+_ATPase"/>
</dbReference>
<dbReference type="InterPro" id="IPR003439">
    <property type="entry name" value="ABC_transporter-like_ATP-bd"/>
</dbReference>
<dbReference type="InterPro" id="IPR017871">
    <property type="entry name" value="ABC_transporter-like_CS"/>
</dbReference>
<dbReference type="InterPro" id="IPR005895">
    <property type="entry name" value="ABC_transptr_haem_export_CcmA"/>
</dbReference>
<dbReference type="InterPro" id="IPR027417">
    <property type="entry name" value="P-loop_NTPase"/>
</dbReference>
<dbReference type="NCBIfam" id="TIGR01189">
    <property type="entry name" value="ccmA"/>
    <property type="match status" value="1"/>
</dbReference>
<dbReference type="NCBIfam" id="NF010061">
    <property type="entry name" value="PRK13538.1"/>
    <property type="match status" value="1"/>
</dbReference>
<dbReference type="PANTHER" id="PTHR43499">
    <property type="entry name" value="ABC TRANSPORTER I FAMILY MEMBER 1"/>
    <property type="match status" value="1"/>
</dbReference>
<dbReference type="PANTHER" id="PTHR43499:SF1">
    <property type="entry name" value="ABC TRANSPORTER I FAMILY MEMBER 1"/>
    <property type="match status" value="1"/>
</dbReference>
<dbReference type="Pfam" id="PF00005">
    <property type="entry name" value="ABC_tran"/>
    <property type="match status" value="1"/>
</dbReference>
<dbReference type="SMART" id="SM00382">
    <property type="entry name" value="AAA"/>
    <property type="match status" value="1"/>
</dbReference>
<dbReference type="SUPFAM" id="SSF52540">
    <property type="entry name" value="P-loop containing nucleoside triphosphate hydrolases"/>
    <property type="match status" value="1"/>
</dbReference>
<dbReference type="PROSITE" id="PS00211">
    <property type="entry name" value="ABC_TRANSPORTER_1"/>
    <property type="match status" value="1"/>
</dbReference>
<dbReference type="PROSITE" id="PS50893">
    <property type="entry name" value="ABC_TRANSPORTER_2"/>
    <property type="match status" value="1"/>
</dbReference>
<dbReference type="PROSITE" id="PS51243">
    <property type="entry name" value="CCMA"/>
    <property type="match status" value="1"/>
</dbReference>
<feature type="chain" id="PRO_0000271923" description="Cytochrome c biogenesis ATP-binding export protein CcmA">
    <location>
        <begin position="1"/>
        <end position="207"/>
    </location>
</feature>
<feature type="domain" description="ABC transporter" evidence="1">
    <location>
        <begin position="4"/>
        <end position="207"/>
    </location>
</feature>
<feature type="binding site" evidence="1">
    <location>
        <begin position="36"/>
        <end position="43"/>
    </location>
    <ligand>
        <name>ATP</name>
        <dbReference type="ChEBI" id="CHEBI:30616"/>
    </ligand>
</feature>
<proteinExistence type="inferred from homology"/>
<evidence type="ECO:0000255" key="1">
    <source>
        <dbReference type="HAMAP-Rule" id="MF_01707"/>
    </source>
</evidence>
<evidence type="ECO:0000305" key="2"/>
<sequence length="207" mass="23053">MGMLEARELLCERDERTLFSGLSFTLNAGEWVQITGSNGAGKTTLLRLLTGLSRPDAGEVLWQGQPLHQVRDSYHQNLLWIGHQPGIKTRLTALENLHFYHRDGDTAQCLEALAQAGLAGFEDIPVNQLSAGQQRRVALARLWLTRATLWILDEPFTAIDVNGVDRLTQRMAQHTEQGGIVILTTHQPLNVAESKIRRISLTQTRAA</sequence>
<organism>
    <name type="scientific">Escherichia coli O6:K15:H31 (strain 536 / UPEC)</name>
    <dbReference type="NCBI Taxonomy" id="362663"/>
    <lineage>
        <taxon>Bacteria</taxon>
        <taxon>Pseudomonadati</taxon>
        <taxon>Pseudomonadota</taxon>
        <taxon>Gammaproteobacteria</taxon>
        <taxon>Enterobacterales</taxon>
        <taxon>Enterobacteriaceae</taxon>
        <taxon>Escherichia</taxon>
    </lineage>
</organism>